<keyword id="KW-0488">Methylation</keyword>
<keyword id="KW-0687">Ribonucleoprotein</keyword>
<keyword id="KW-0689">Ribosomal protein</keyword>
<keyword id="KW-0694">RNA-binding</keyword>
<keyword id="KW-0699">rRNA-binding</keyword>
<sequence>MAKQVEKLVKLQIPAGKATPAPPVGPALGQAGVNIMGFTKEFNARTADQAGMIIPVVISVYDDKSFTFITKTPPAAVLLKKAAGVQKGSGEPNKTKVASVTKAQIKEIAELKMPDLNAASVETAMSMIEGTAKSMGFTVTD</sequence>
<name>RL11_LACLS</name>
<accession>Q02WD2</accession>
<gene>
    <name evidence="1" type="primary">rplK</name>
    <name type="ordered locus">LACR_2284</name>
</gene>
<feature type="chain" id="PRO_1000046200" description="Large ribosomal subunit protein uL11">
    <location>
        <begin position="1"/>
        <end position="141"/>
    </location>
</feature>
<evidence type="ECO:0000255" key="1">
    <source>
        <dbReference type="HAMAP-Rule" id="MF_00736"/>
    </source>
</evidence>
<evidence type="ECO:0000305" key="2"/>
<comment type="function">
    <text evidence="1">Forms part of the ribosomal stalk which helps the ribosome interact with GTP-bound translation factors.</text>
</comment>
<comment type="subunit">
    <text evidence="1">Part of the ribosomal stalk of the 50S ribosomal subunit. Interacts with L10 and the large rRNA to form the base of the stalk. L10 forms an elongated spine to which L12 dimers bind in a sequential fashion forming a multimeric L10(L12)X complex.</text>
</comment>
<comment type="PTM">
    <text evidence="1">One or more lysine residues are methylated.</text>
</comment>
<comment type="similarity">
    <text evidence="1">Belongs to the universal ribosomal protein uL11 family.</text>
</comment>
<protein>
    <recommendedName>
        <fullName evidence="1">Large ribosomal subunit protein uL11</fullName>
    </recommendedName>
    <alternativeName>
        <fullName evidence="2">50S ribosomal protein L11</fullName>
    </alternativeName>
</protein>
<dbReference type="EMBL" id="CP000425">
    <property type="protein sequence ID" value="ABJ73740.1"/>
    <property type="molecule type" value="Genomic_DNA"/>
</dbReference>
<dbReference type="RefSeq" id="WP_011677074.1">
    <property type="nucleotide sequence ID" value="NC_008527.1"/>
</dbReference>
<dbReference type="SMR" id="Q02WD2"/>
<dbReference type="GeneID" id="61110327"/>
<dbReference type="KEGG" id="llc:LACR_2284"/>
<dbReference type="HOGENOM" id="CLU_074237_2_1_9"/>
<dbReference type="Proteomes" id="UP000000240">
    <property type="component" value="Chromosome"/>
</dbReference>
<dbReference type="GO" id="GO:0022625">
    <property type="term" value="C:cytosolic large ribosomal subunit"/>
    <property type="evidence" value="ECO:0007669"/>
    <property type="project" value="TreeGrafter"/>
</dbReference>
<dbReference type="GO" id="GO:0070180">
    <property type="term" value="F:large ribosomal subunit rRNA binding"/>
    <property type="evidence" value="ECO:0007669"/>
    <property type="project" value="UniProtKB-UniRule"/>
</dbReference>
<dbReference type="GO" id="GO:0003735">
    <property type="term" value="F:structural constituent of ribosome"/>
    <property type="evidence" value="ECO:0007669"/>
    <property type="project" value="InterPro"/>
</dbReference>
<dbReference type="GO" id="GO:0006412">
    <property type="term" value="P:translation"/>
    <property type="evidence" value="ECO:0007669"/>
    <property type="project" value="UniProtKB-UniRule"/>
</dbReference>
<dbReference type="CDD" id="cd00349">
    <property type="entry name" value="Ribosomal_L11"/>
    <property type="match status" value="1"/>
</dbReference>
<dbReference type="FunFam" id="1.10.10.250:FF:000001">
    <property type="entry name" value="50S ribosomal protein L11"/>
    <property type="match status" value="1"/>
</dbReference>
<dbReference type="FunFam" id="3.30.1550.10:FF:000001">
    <property type="entry name" value="50S ribosomal protein L11"/>
    <property type="match status" value="1"/>
</dbReference>
<dbReference type="Gene3D" id="1.10.10.250">
    <property type="entry name" value="Ribosomal protein L11, C-terminal domain"/>
    <property type="match status" value="1"/>
</dbReference>
<dbReference type="Gene3D" id="3.30.1550.10">
    <property type="entry name" value="Ribosomal protein L11/L12, N-terminal domain"/>
    <property type="match status" value="1"/>
</dbReference>
<dbReference type="HAMAP" id="MF_00736">
    <property type="entry name" value="Ribosomal_uL11"/>
    <property type="match status" value="1"/>
</dbReference>
<dbReference type="InterPro" id="IPR000911">
    <property type="entry name" value="Ribosomal_uL11"/>
</dbReference>
<dbReference type="InterPro" id="IPR006519">
    <property type="entry name" value="Ribosomal_uL11_bac-typ"/>
</dbReference>
<dbReference type="InterPro" id="IPR020783">
    <property type="entry name" value="Ribosomal_uL11_C"/>
</dbReference>
<dbReference type="InterPro" id="IPR036769">
    <property type="entry name" value="Ribosomal_uL11_C_sf"/>
</dbReference>
<dbReference type="InterPro" id="IPR020784">
    <property type="entry name" value="Ribosomal_uL11_N"/>
</dbReference>
<dbReference type="InterPro" id="IPR036796">
    <property type="entry name" value="Ribosomal_uL11_N_sf"/>
</dbReference>
<dbReference type="NCBIfam" id="TIGR01632">
    <property type="entry name" value="L11_bact"/>
    <property type="match status" value="1"/>
</dbReference>
<dbReference type="PANTHER" id="PTHR11661">
    <property type="entry name" value="60S RIBOSOMAL PROTEIN L12"/>
    <property type="match status" value="1"/>
</dbReference>
<dbReference type="PANTHER" id="PTHR11661:SF1">
    <property type="entry name" value="LARGE RIBOSOMAL SUBUNIT PROTEIN UL11M"/>
    <property type="match status" value="1"/>
</dbReference>
<dbReference type="Pfam" id="PF00298">
    <property type="entry name" value="Ribosomal_L11"/>
    <property type="match status" value="1"/>
</dbReference>
<dbReference type="Pfam" id="PF03946">
    <property type="entry name" value="Ribosomal_L11_N"/>
    <property type="match status" value="1"/>
</dbReference>
<dbReference type="SMART" id="SM00649">
    <property type="entry name" value="RL11"/>
    <property type="match status" value="1"/>
</dbReference>
<dbReference type="SUPFAM" id="SSF54747">
    <property type="entry name" value="Ribosomal L11/L12e N-terminal domain"/>
    <property type="match status" value="1"/>
</dbReference>
<dbReference type="SUPFAM" id="SSF46906">
    <property type="entry name" value="Ribosomal protein L11, C-terminal domain"/>
    <property type="match status" value="1"/>
</dbReference>
<organism>
    <name type="scientific">Lactococcus lactis subsp. cremoris (strain SK11)</name>
    <dbReference type="NCBI Taxonomy" id="272622"/>
    <lineage>
        <taxon>Bacteria</taxon>
        <taxon>Bacillati</taxon>
        <taxon>Bacillota</taxon>
        <taxon>Bacilli</taxon>
        <taxon>Lactobacillales</taxon>
        <taxon>Streptococcaceae</taxon>
        <taxon>Lactococcus</taxon>
        <taxon>Lactococcus cremoris subsp. cremoris</taxon>
    </lineage>
</organism>
<reference key="1">
    <citation type="journal article" date="2006" name="Proc. Natl. Acad. Sci. U.S.A.">
        <title>Comparative genomics of the lactic acid bacteria.</title>
        <authorList>
            <person name="Makarova K.S."/>
            <person name="Slesarev A."/>
            <person name="Wolf Y.I."/>
            <person name="Sorokin A."/>
            <person name="Mirkin B."/>
            <person name="Koonin E.V."/>
            <person name="Pavlov A."/>
            <person name="Pavlova N."/>
            <person name="Karamychev V."/>
            <person name="Polouchine N."/>
            <person name="Shakhova V."/>
            <person name="Grigoriev I."/>
            <person name="Lou Y."/>
            <person name="Rohksar D."/>
            <person name="Lucas S."/>
            <person name="Huang K."/>
            <person name="Goodstein D.M."/>
            <person name="Hawkins T."/>
            <person name="Plengvidhya V."/>
            <person name="Welker D."/>
            <person name="Hughes J."/>
            <person name="Goh Y."/>
            <person name="Benson A."/>
            <person name="Baldwin K."/>
            <person name="Lee J.-H."/>
            <person name="Diaz-Muniz I."/>
            <person name="Dosti B."/>
            <person name="Smeianov V."/>
            <person name="Wechter W."/>
            <person name="Barabote R."/>
            <person name="Lorca G."/>
            <person name="Altermann E."/>
            <person name="Barrangou R."/>
            <person name="Ganesan B."/>
            <person name="Xie Y."/>
            <person name="Rawsthorne H."/>
            <person name="Tamir D."/>
            <person name="Parker C."/>
            <person name="Breidt F."/>
            <person name="Broadbent J.R."/>
            <person name="Hutkins R."/>
            <person name="O'Sullivan D."/>
            <person name="Steele J."/>
            <person name="Unlu G."/>
            <person name="Saier M.H. Jr."/>
            <person name="Klaenhammer T."/>
            <person name="Richardson P."/>
            <person name="Kozyavkin S."/>
            <person name="Weimer B.C."/>
            <person name="Mills D.A."/>
        </authorList>
    </citation>
    <scope>NUCLEOTIDE SEQUENCE [LARGE SCALE GENOMIC DNA]</scope>
    <source>
        <strain>SK11</strain>
    </source>
</reference>
<proteinExistence type="inferred from homology"/>